<feature type="chain" id="PRO_0000324284" description="Endosome-associated-trafficking regulator 1">
    <location>
        <begin position="1"/>
        <end position="359"/>
    </location>
</feature>
<feature type="region of interest" description="Required for interaction with PTPN13" evidence="2">
    <location>
        <begin position="100"/>
        <end position="125"/>
    </location>
</feature>
<feature type="region of interest" description="Disordered" evidence="4">
    <location>
        <begin position="153"/>
        <end position="180"/>
    </location>
</feature>
<feature type="coiled-coil region" evidence="3">
    <location>
        <begin position="185"/>
        <end position="295"/>
    </location>
</feature>
<feature type="compositionally biased region" description="Polar residues" evidence="4">
    <location>
        <begin position="159"/>
        <end position="174"/>
    </location>
</feature>
<feature type="modified residue" description="Phosphoserine" evidence="2">
    <location>
        <position position="18"/>
    </location>
</feature>
<feature type="modified residue" description="Phosphoserine" evidence="2">
    <location>
        <position position="74"/>
    </location>
</feature>
<feature type="modified residue" description="Phosphoserine" evidence="2">
    <location>
        <position position="167"/>
    </location>
</feature>
<feature type="modified residue" description="Phosphoserine" evidence="2">
    <location>
        <position position="171"/>
    </location>
</feature>
<keyword id="KW-0131">Cell cycle</keyword>
<keyword id="KW-0132">Cell division</keyword>
<keyword id="KW-0966">Cell projection</keyword>
<keyword id="KW-0970">Cilium biogenesis/degradation</keyword>
<keyword id="KW-0175">Coiled coil</keyword>
<keyword id="KW-0963">Cytoplasm</keyword>
<keyword id="KW-0206">Cytoskeleton</keyword>
<keyword id="KW-0967">Endosome</keyword>
<keyword id="KW-0597">Phosphoprotein</keyword>
<keyword id="KW-0653">Protein transport</keyword>
<keyword id="KW-1185">Reference proteome</keyword>
<keyword id="KW-0813">Transport</keyword>
<dbReference type="EMBL" id="BC105395">
    <property type="protein sequence ID" value="AAI05396.1"/>
    <property type="molecule type" value="mRNA"/>
</dbReference>
<dbReference type="RefSeq" id="NP_001039605.1">
    <property type="nucleotide sequence ID" value="NM_001046140.2"/>
</dbReference>
<dbReference type="SMR" id="Q2KJD6"/>
<dbReference type="FunCoup" id="Q2KJD6">
    <property type="interactions" value="17"/>
</dbReference>
<dbReference type="STRING" id="9913.ENSBTAP00000065578"/>
<dbReference type="PaxDb" id="9913-ENSBTAP00000049441"/>
<dbReference type="GeneID" id="513180"/>
<dbReference type="KEGG" id="bta:513180"/>
<dbReference type="CTD" id="10807"/>
<dbReference type="eggNOG" id="ENOG502QUJK">
    <property type="taxonomic scope" value="Eukaryota"/>
</dbReference>
<dbReference type="HOGENOM" id="CLU_051353_0_0_1"/>
<dbReference type="InParanoid" id="Q2KJD6"/>
<dbReference type="OrthoDB" id="6499155at2759"/>
<dbReference type="TreeFam" id="TF335840"/>
<dbReference type="Proteomes" id="UP000009136">
    <property type="component" value="Unplaced"/>
</dbReference>
<dbReference type="GO" id="GO:0005813">
    <property type="term" value="C:centrosome"/>
    <property type="evidence" value="ECO:0000250"/>
    <property type="project" value="UniProtKB"/>
</dbReference>
<dbReference type="GO" id="GO:0036064">
    <property type="term" value="C:ciliary basal body"/>
    <property type="evidence" value="ECO:0000250"/>
    <property type="project" value="UniProtKB"/>
</dbReference>
<dbReference type="GO" id="GO:0005769">
    <property type="term" value="C:early endosome"/>
    <property type="evidence" value="ECO:0000318"/>
    <property type="project" value="GO_Central"/>
</dbReference>
<dbReference type="GO" id="GO:0030496">
    <property type="term" value="C:midbody"/>
    <property type="evidence" value="ECO:0000318"/>
    <property type="project" value="GO_Central"/>
</dbReference>
<dbReference type="GO" id="GO:0055037">
    <property type="term" value="C:recycling endosome"/>
    <property type="evidence" value="ECO:0000318"/>
    <property type="project" value="GO_Central"/>
</dbReference>
<dbReference type="GO" id="GO:0051301">
    <property type="term" value="P:cell division"/>
    <property type="evidence" value="ECO:0007669"/>
    <property type="project" value="UniProtKB-KW"/>
</dbReference>
<dbReference type="GO" id="GO:0030030">
    <property type="term" value="P:cell projection organization"/>
    <property type="evidence" value="ECO:0007669"/>
    <property type="project" value="UniProtKB-KW"/>
</dbReference>
<dbReference type="GO" id="GO:0045724">
    <property type="term" value="P:positive regulation of cilium assembly"/>
    <property type="evidence" value="ECO:0000250"/>
    <property type="project" value="UniProtKB"/>
</dbReference>
<dbReference type="GO" id="GO:1903566">
    <property type="term" value="P:positive regulation of protein localization to cilium"/>
    <property type="evidence" value="ECO:0000250"/>
    <property type="project" value="UniProtKB"/>
</dbReference>
<dbReference type="GO" id="GO:0015031">
    <property type="term" value="P:protein transport"/>
    <property type="evidence" value="ECO:0007669"/>
    <property type="project" value="UniProtKB-KW"/>
</dbReference>
<dbReference type="GO" id="GO:0032465">
    <property type="term" value="P:regulation of cytokinesis"/>
    <property type="evidence" value="ECO:0000318"/>
    <property type="project" value="GO_Central"/>
</dbReference>
<dbReference type="InterPro" id="IPR026757">
    <property type="entry name" value="ENTR1"/>
</dbReference>
<dbReference type="PANTHER" id="PTHR31259">
    <property type="entry name" value="ENDOSOME-ASSOCIATED TRAFFICKING REGULATOR 1"/>
    <property type="match status" value="1"/>
</dbReference>
<dbReference type="PANTHER" id="PTHR31259:SF3">
    <property type="entry name" value="ENDOSOME-ASSOCIATED-TRAFFICKING REGULATOR 1"/>
    <property type="match status" value="1"/>
</dbReference>
<gene>
    <name evidence="2" type="primary">ENTR1</name>
    <name type="synonym">SDCCAG3</name>
</gene>
<accession>Q2KJD6</accession>
<comment type="function">
    <text evidence="1 2">Endosome-associated protein that plays a role in membrane receptor sorting, cytokinesis and ciliogenesis. Involved in the endosome-to-plasma membrane trafficking and recycling of SNX27-retromer-dependent cargo proteins, such as GLUT1. Involved in the regulation of cytokinesis; the function may involve PTPN13 and GIT1. Plays a role in the formation of cilia. Involved in cargo protein localization, such as PKD2, at primary cilia (By similarity). Involved in the presentation of the tumor necrosis factor (TNF) receptor TNFRSF1A on the cell surface, and hence in the modulation of the TNF-induced apoptosis (By similarity).</text>
</comment>
<comment type="subunit">
    <text evidence="2">Found in a complex with ENTR1, PTPN13 and GIT1. Interacts with PTPN13 (via the FERM domain). Interacts (via N-terminus) with GIT1 (via N- and C-terminus); this interaction is direct. Interacts with NOD2. Interacts (via N-terminus) with IFT88. Interacts with VPS35.</text>
</comment>
<comment type="subcellular location">
    <subcellularLocation>
        <location evidence="1">Cytoplasm</location>
    </subcellularLocation>
    <subcellularLocation>
        <location evidence="2">Early endosome</location>
    </subcellularLocation>
    <subcellularLocation>
        <location evidence="2">Endosome</location>
    </subcellularLocation>
    <subcellularLocation>
        <location evidence="2">Recycling endosome</location>
    </subcellularLocation>
    <subcellularLocation>
        <location evidence="2">Midbody</location>
    </subcellularLocation>
    <subcellularLocation>
        <location evidence="2">Cytoplasm</location>
        <location evidence="2">Cytoskeleton</location>
        <location evidence="2">Microtubule organizing center</location>
        <location evidence="2">Centrosome</location>
    </subcellularLocation>
    <subcellularLocation>
        <location evidence="2">Cytoplasm</location>
        <location evidence="2">Cytoskeleton</location>
        <location evidence="2">Cilium basal body</location>
    </subcellularLocation>
    <text evidence="2">Colocalizes in a WASHC2-dependent manner with the retromer CSC complex at endosomes. During cytokinesis colocalized with PTPN13 at the midbody. Colocalizes with IFT88 and gamma-tubulin at the basal body of primary cilia. Colocalizes with IFT88 and pericentrin at the centrosome.</text>
</comment>
<comment type="domain">
    <text evidence="2">Tne N-terminal domain is necessary and sufficient for basal body localization and ciliogenesis.</text>
</comment>
<comment type="PTM">
    <text evidence="2">Phosphorylated.</text>
</comment>
<comment type="similarity">
    <text evidence="5">Belongs to the ENTR1 family.</text>
</comment>
<protein>
    <recommendedName>
        <fullName evidence="5">Endosome-associated-trafficking regulator 1</fullName>
    </recommendedName>
    <alternativeName>
        <fullName evidence="2">Serologically defined colon cancer antigen 3 homolog</fullName>
    </alternativeName>
</protein>
<name>ENTR1_BOVIN</name>
<proteinExistence type="evidence at transcript level"/>
<evidence type="ECO:0000250" key="1">
    <source>
        <dbReference type="UniProtKB" id="A2AIW0"/>
    </source>
</evidence>
<evidence type="ECO:0000250" key="2">
    <source>
        <dbReference type="UniProtKB" id="Q96C92"/>
    </source>
</evidence>
<evidence type="ECO:0000255" key="3"/>
<evidence type="ECO:0000256" key="4">
    <source>
        <dbReference type="SAM" id="MobiDB-lite"/>
    </source>
</evidence>
<evidence type="ECO:0000305" key="5"/>
<sequence length="359" mass="39871">MAGYARRPGVTPLSRARSLVIPDDDKLGDLEAANPFSFKEFLKTKNLSLSKEDTDSRVYSQEATRHSLGLDRTSPASQTVGYGLEYQQPFFEDPTGAGDLLDEDEDEEDGWNGAYLPSAMEQTHSSRVAASTSPCSTYVSFFSNPSELVGPESLPPWTLSDSDSRISPTGSPSADFTAHGESLGDRHLRTLQISYEALKDENSKLRRKLTEIQSFSETQTEMVRTLERKLEAKMIKEESDYHDLESVVQQVEQNLELMTKRAVKAENHVLKLRQEVSLLQAQVSDFKRENEALRSGQGASLTVVKQNTDVALQNLRVVMNNAHASIKQLVSGAETLNLVAEILKSIDRISEIKDQGEES</sequence>
<reference key="1">
    <citation type="submission" date="2005-09" db="EMBL/GenBank/DDBJ databases">
        <authorList>
            <consortium name="NIH - Mammalian Gene Collection (MGC) project"/>
        </authorList>
    </citation>
    <scope>NUCLEOTIDE SEQUENCE [LARGE SCALE MRNA]</scope>
    <source>
        <strain>Crossbred X Angus</strain>
        <tissue>Ileum</tissue>
    </source>
</reference>
<organism>
    <name type="scientific">Bos taurus</name>
    <name type="common">Bovine</name>
    <dbReference type="NCBI Taxonomy" id="9913"/>
    <lineage>
        <taxon>Eukaryota</taxon>
        <taxon>Metazoa</taxon>
        <taxon>Chordata</taxon>
        <taxon>Craniata</taxon>
        <taxon>Vertebrata</taxon>
        <taxon>Euteleostomi</taxon>
        <taxon>Mammalia</taxon>
        <taxon>Eutheria</taxon>
        <taxon>Laurasiatheria</taxon>
        <taxon>Artiodactyla</taxon>
        <taxon>Ruminantia</taxon>
        <taxon>Pecora</taxon>
        <taxon>Bovidae</taxon>
        <taxon>Bovinae</taxon>
        <taxon>Bos</taxon>
    </lineage>
</organism>